<protein>
    <recommendedName>
        <fullName>Phospholipid-transporting ATPase IC</fullName>
        <ecNumber>7.6.2.1</ecNumber>
    </recommendedName>
    <alternativeName>
        <fullName>ATPase class I type 8B member 1</fullName>
    </alternativeName>
    <alternativeName>
        <fullName>P4-ATPase flippase complex alpha subunit atp8b1</fullName>
    </alternativeName>
</protein>
<gene>
    <name type="primary">atp8b1</name>
</gene>
<sequence length="1250" mass="142665">MDTDYESTYEDDSQVPNDDVVPYSDDETDDELDSPQTDEPEQNRRNVQAEQSREPVIKECTWQVKANDRNFYDQPEFKKKVFLCLKKSKYAGNAIKTYKYNPITFLPVNLYEQFKRAANAYFLVLLILQTIPQISTVTWSTTLIPLLLVLGITAIKDLVDDIARHKMDNEINNRPSEVITDGRFKKTKWKHIHVGDIIRINKNEFVPADVLLLSSSDPNSLCYVETAELDGETNLKFKMSLEITDKLLQKEEQLAGFDGLVECEEPNNRLDKFVGTLFWRGNSFGLDADKILLRGCTVRNTEYCHGLVLFAGADTKIMRNSGKTRLKRTKIDYLMNYMVYTIFVLLILAAAGLAIGQTFWEAKLGAANVSWYLYDGNNYSPSYRGFLAFWGYIIVLNTMVPISLYVSVEVIRLGQSYFINWDLQMYFSPKDTPAKARTTTLNEQLGQIQYIFSDKTGTLTQNIMTFKKCTINGTTYGDDDDELKSGQTKQVDFSWNPLADPSFTFHDNYLIEQIRAGKDKDVYEFFKLLALCHTVMAEKTDGELIYQAASPDEGALVTAARNFGFVFLSRTQSTITISELGQEKTYEVLAILDFNSDRKRMSIIVRQPDGRIRLYCKGADTVIYERLHPDNPIKDQTQKALDIFANASLRTLCLCYKDINKGDFENWSKKYKQASVATSNRDEALDRVYEAIETDLKLLGATAIEDKLQDDVSGTIFNLARADIKIWVLTGDKKETAENIGYSCKLLDDDTEILYGEDINVHLQTRMENQRNQMSGNQGAQSNQSGAFLPTDKKHALIITGSWLNEILLEKKKRKKKRLKLKFPRTKEEKEQQLHEKLKAYALKEQRQRSFVDLACECSAVICCRVTPKQKAMVVDLVKRYKKAVTLAIGDGANDVNMIKTAHIGVGISGQEGMQAVMSSDYSFAQFRYLQRLLLVHGRWSYIRMCKFLRYFFYKNFSFTLVHFWYSFFNGFSAQTVYEDWFITLYNVLYSSLPVLLVGLLDQDVSDKLSLAFPRLYVPGQKDLLFNYKKFFLSLFHGIVTSLIIFFIPYGAFLLTMGQDGEAPSDYQSFAVTTATALVITVNFQIGLDTSYWTFVNAFSIFGSIAIYFGIMFDLHSAGIHVLFPSMFIFTGAAPNALRQPYLWLTIILTVAFCLLPIVALRFLAKTIWPSESDKIQKKGKKFKAEVEQRAKPKPFARGVSTRRSAYAFSHQRGYADLISSGRSIRKKRASLDAVFDNYPAQITHFTPQT</sequence>
<proteinExistence type="evidence at transcript level"/>
<reference key="1">
    <citation type="submission" date="2005-02" db="EMBL/GenBank/DDBJ databases">
        <authorList>
            <consortium name="NIH - Xenopus Gene Collection (XGC) project"/>
        </authorList>
    </citation>
    <scope>NUCLEOTIDE SEQUENCE [LARGE SCALE MRNA]</scope>
    <source>
        <tissue>Embryo</tissue>
    </source>
</reference>
<comment type="function">
    <text evidence="1 3">Catalytic component of a P4-ATPase flippase complex which catalyzes the hydrolysis of ATP coupled to the transport of aminophospholipids from the outer to the inner leaflet of various membranes and ensures the maintenance of asymmetric distribution of phospholipids (By similarity). Phospholipid translocation also seems to be implicated in vesicle formation and in uptake of lipid signaling molecules. May also participate in the establishment of the canalicular membrane integrity by ensuring asymmetric distribution of phospholipids in the canicular membrane (By similarity).</text>
</comment>
<comment type="catalytic activity">
    <reaction evidence="1">
        <text>ATP + H2O + phospholipidSide 1 = ADP + phosphate + phospholipidSide 2.</text>
        <dbReference type="EC" id="7.6.2.1"/>
    </reaction>
</comment>
<comment type="catalytic activity">
    <reaction evidence="1">
        <text>a 1,2-diacyl-sn-glycero-3-phospho-L-serine(out) + ATP + H2O = a 1,2-diacyl-sn-glycero-3-phospho-L-serine(in) + ADP + phosphate + H(+)</text>
        <dbReference type="Rhea" id="RHEA:38567"/>
        <dbReference type="ChEBI" id="CHEBI:15377"/>
        <dbReference type="ChEBI" id="CHEBI:15378"/>
        <dbReference type="ChEBI" id="CHEBI:30616"/>
        <dbReference type="ChEBI" id="CHEBI:43474"/>
        <dbReference type="ChEBI" id="CHEBI:57262"/>
        <dbReference type="ChEBI" id="CHEBI:456216"/>
    </reaction>
    <physiologicalReaction direction="left-to-right" evidence="1">
        <dbReference type="Rhea" id="RHEA:38568"/>
    </physiologicalReaction>
</comment>
<comment type="cofactor">
    <cofactor evidence="5">
        <name>Mg(2+)</name>
        <dbReference type="ChEBI" id="CHEBI:18420"/>
    </cofactor>
</comment>
<comment type="subunit">
    <text evidence="1">Component of a P4-ATPase flippase complex which consists of a catalytic alpha subunit and an accessory beta subunit. The flippase ATP8B1:TMEM30A complex can form an intermediate phosphoenzyme in vitro. Also interacts with beta subunit TMEM30B.</text>
</comment>
<comment type="subcellular location">
    <subcellularLocation>
        <location evidence="1">Cell membrane</location>
        <topology evidence="1">Multi-pass membrane protein</topology>
    </subcellularLocation>
    <subcellularLocation>
        <location evidence="1">Apical cell membrane</location>
    </subcellularLocation>
    <subcellularLocation>
        <location evidence="3">Cell projection</location>
        <location evidence="3">Stereocilium</location>
    </subcellularLocation>
    <subcellularLocation>
        <location evidence="1">Endoplasmic reticulum</location>
    </subcellularLocation>
    <subcellularLocation>
        <location evidence="1">Golgi apparatus</location>
    </subcellularLocation>
    <text evidence="1">Exit from the endoplasmic reticulum requires the presence of TMEM30A or TMEM30B. Localizes to apical membranes in epithelial cells.</text>
</comment>
<comment type="similarity">
    <text evidence="8">Belongs to the cation transport ATPase (P-type) (TC 3.A.3) family. Type IV subfamily.</text>
</comment>
<evidence type="ECO:0000250" key="1">
    <source>
        <dbReference type="UniProtKB" id="O43520"/>
    </source>
</evidence>
<evidence type="ECO:0000250" key="2">
    <source>
        <dbReference type="UniProtKB" id="P04191"/>
    </source>
</evidence>
<evidence type="ECO:0000250" key="3">
    <source>
        <dbReference type="UniProtKB" id="Q148W0"/>
    </source>
</evidence>
<evidence type="ECO:0000250" key="4">
    <source>
        <dbReference type="UniProtKB" id="Q8NB49"/>
    </source>
</evidence>
<evidence type="ECO:0000250" key="5">
    <source>
        <dbReference type="UniProtKB" id="Q9Y2Q0"/>
    </source>
</evidence>
<evidence type="ECO:0000255" key="6"/>
<evidence type="ECO:0000256" key="7">
    <source>
        <dbReference type="SAM" id="MobiDB-lite"/>
    </source>
</evidence>
<evidence type="ECO:0000305" key="8"/>
<organism>
    <name type="scientific">Xenopus tropicalis</name>
    <name type="common">Western clawed frog</name>
    <name type="synonym">Silurana tropicalis</name>
    <dbReference type="NCBI Taxonomy" id="8364"/>
    <lineage>
        <taxon>Eukaryota</taxon>
        <taxon>Metazoa</taxon>
        <taxon>Chordata</taxon>
        <taxon>Craniata</taxon>
        <taxon>Vertebrata</taxon>
        <taxon>Euteleostomi</taxon>
        <taxon>Amphibia</taxon>
        <taxon>Batrachia</taxon>
        <taxon>Anura</taxon>
        <taxon>Pipoidea</taxon>
        <taxon>Pipidae</taxon>
        <taxon>Xenopodinae</taxon>
        <taxon>Xenopus</taxon>
        <taxon>Silurana</taxon>
    </lineage>
</organism>
<accession>Q5BL50</accession>
<keyword id="KW-0067">ATP-binding</keyword>
<keyword id="KW-1003">Cell membrane</keyword>
<keyword id="KW-0966">Cell projection</keyword>
<keyword id="KW-0256">Endoplasmic reticulum</keyword>
<keyword id="KW-0333">Golgi apparatus</keyword>
<keyword id="KW-0445">Lipid transport</keyword>
<keyword id="KW-0460">Magnesium</keyword>
<keyword id="KW-0472">Membrane</keyword>
<keyword id="KW-0479">Metal-binding</keyword>
<keyword id="KW-0547">Nucleotide-binding</keyword>
<keyword id="KW-0597">Phosphoprotein</keyword>
<keyword id="KW-1185">Reference proteome</keyword>
<keyword id="KW-1278">Translocase</keyword>
<keyword id="KW-0812">Transmembrane</keyword>
<keyword id="KW-1133">Transmembrane helix</keyword>
<keyword id="KW-0813">Transport</keyword>
<feature type="chain" id="PRO_0000370863" description="Phospholipid-transporting ATPase IC">
    <location>
        <begin position="1"/>
        <end position="1250"/>
    </location>
</feature>
<feature type="topological domain" description="Cytoplasmic" evidence="6">
    <location>
        <begin position="1"/>
        <end position="133"/>
    </location>
</feature>
<feature type="transmembrane region" description="Helical" evidence="6">
    <location>
        <begin position="134"/>
        <end position="154"/>
    </location>
</feature>
<feature type="topological domain" description="Exoplasmic loop" evidence="6">
    <location>
        <begin position="155"/>
        <end position="338"/>
    </location>
</feature>
<feature type="transmembrane region" description="Helical" evidence="6">
    <location>
        <begin position="339"/>
        <end position="359"/>
    </location>
</feature>
<feature type="topological domain" description="Cytoplasmic" evidence="6">
    <location>
        <begin position="360"/>
        <end position="385"/>
    </location>
</feature>
<feature type="transmembrane region" description="Helical" evidence="6">
    <location>
        <begin position="386"/>
        <end position="406"/>
    </location>
</feature>
<feature type="topological domain" description="Exoplasmic loop" evidence="6">
    <location>
        <begin position="407"/>
        <end position="956"/>
    </location>
</feature>
<feature type="transmembrane region" description="Helical" evidence="6">
    <location>
        <begin position="957"/>
        <end position="977"/>
    </location>
</feature>
<feature type="topological domain" description="Cytoplasmic" evidence="6">
    <location>
        <begin position="978"/>
        <end position="980"/>
    </location>
</feature>
<feature type="transmembrane region" description="Helical" evidence="6">
    <location>
        <begin position="981"/>
        <end position="1001"/>
    </location>
</feature>
<feature type="topological domain" description="Exoplasmic loop" evidence="6">
    <location>
        <begin position="1002"/>
        <end position="1034"/>
    </location>
</feature>
<feature type="transmembrane region" description="Helical" evidence="6">
    <location>
        <begin position="1035"/>
        <end position="1055"/>
    </location>
</feature>
<feature type="topological domain" description="Cytoplasmic" evidence="6">
    <location>
        <begin position="1056"/>
        <end position="1069"/>
    </location>
</feature>
<feature type="transmembrane region" description="Helical" evidence="6">
    <location>
        <begin position="1070"/>
        <end position="1090"/>
    </location>
</feature>
<feature type="topological domain" description="Exoplasmic loop" evidence="6">
    <location>
        <begin position="1091"/>
        <end position="1092"/>
    </location>
</feature>
<feature type="transmembrane region" description="Helical" evidence="6">
    <location>
        <begin position="1093"/>
        <end position="1113"/>
    </location>
</feature>
<feature type="topological domain" description="Cytoplasmic" evidence="6">
    <location>
        <begin position="1114"/>
        <end position="1117"/>
    </location>
</feature>
<feature type="transmembrane region" description="Helical" evidence="6">
    <location>
        <begin position="1118"/>
        <end position="1138"/>
    </location>
</feature>
<feature type="topological domain" description="Exoplasmic loop" evidence="6">
    <location>
        <begin position="1139"/>
        <end position="1140"/>
    </location>
</feature>
<feature type="transmembrane region" description="Helical" evidence="6">
    <location>
        <begin position="1141"/>
        <end position="1161"/>
    </location>
</feature>
<feature type="topological domain" description="Cytoplasmic" evidence="6">
    <location>
        <begin position="1162"/>
        <end position="1250"/>
    </location>
</feature>
<feature type="region of interest" description="Disordered" evidence="7">
    <location>
        <begin position="1"/>
        <end position="52"/>
    </location>
</feature>
<feature type="compositionally biased region" description="Acidic residues" evidence="7">
    <location>
        <begin position="1"/>
        <end position="13"/>
    </location>
</feature>
<feature type="compositionally biased region" description="Acidic residues" evidence="7">
    <location>
        <begin position="24"/>
        <end position="40"/>
    </location>
</feature>
<feature type="active site" description="4-aspartylphosphate intermediate" evidence="5">
    <location>
        <position position="454"/>
    </location>
</feature>
<feature type="binding site" evidence="5">
    <location>
        <position position="454"/>
    </location>
    <ligand>
        <name>ATP</name>
        <dbReference type="ChEBI" id="CHEBI:30616"/>
    </ligand>
</feature>
<feature type="binding site" evidence="5">
    <location>
        <position position="454"/>
    </location>
    <ligand>
        <name>Mg(2+)</name>
        <dbReference type="ChEBI" id="CHEBI:18420"/>
    </ligand>
</feature>
<feature type="binding site" evidence="5">
    <location>
        <position position="455"/>
    </location>
    <ligand>
        <name>ATP</name>
        <dbReference type="ChEBI" id="CHEBI:30616"/>
    </ligand>
</feature>
<feature type="binding site" evidence="5">
    <location>
        <position position="456"/>
    </location>
    <ligand>
        <name>ATP</name>
        <dbReference type="ChEBI" id="CHEBI:30616"/>
    </ligand>
</feature>
<feature type="binding site" evidence="5">
    <location>
        <position position="456"/>
    </location>
    <ligand>
        <name>Mg(2+)</name>
        <dbReference type="ChEBI" id="CHEBI:18420"/>
    </ligand>
</feature>
<feature type="binding site" evidence="2">
    <location>
        <position position="553"/>
    </location>
    <ligand>
        <name>ATP</name>
        <dbReference type="ChEBI" id="CHEBI:30616"/>
    </ligand>
</feature>
<feature type="binding site" evidence="5">
    <location>
        <position position="594"/>
    </location>
    <ligand>
        <name>ATP</name>
        <dbReference type="ChEBI" id="CHEBI:30616"/>
    </ligand>
</feature>
<feature type="binding site" evidence="2">
    <location>
        <position position="617"/>
    </location>
    <ligand>
        <name>ATP</name>
        <dbReference type="ChEBI" id="CHEBI:30616"/>
    </ligand>
</feature>
<feature type="binding site" evidence="2">
    <location>
        <position position="650"/>
    </location>
    <ligand>
        <name>ATP</name>
        <dbReference type="ChEBI" id="CHEBI:30616"/>
    </ligand>
</feature>
<feature type="binding site" evidence="2">
    <location>
        <position position="730"/>
    </location>
    <ligand>
        <name>ATP</name>
        <dbReference type="ChEBI" id="CHEBI:30616"/>
    </ligand>
</feature>
<feature type="binding site" evidence="2">
    <location>
        <position position="731"/>
    </location>
    <ligand>
        <name>ATP</name>
        <dbReference type="ChEBI" id="CHEBI:30616"/>
    </ligand>
</feature>
<feature type="binding site" evidence="2">
    <location>
        <position position="732"/>
    </location>
    <ligand>
        <name>ATP</name>
        <dbReference type="ChEBI" id="CHEBI:30616"/>
    </ligand>
</feature>
<feature type="binding site" evidence="2">
    <location>
        <position position="865"/>
    </location>
    <ligand>
        <name>ATP</name>
        <dbReference type="ChEBI" id="CHEBI:30616"/>
    </ligand>
</feature>
<feature type="binding site" evidence="2">
    <location>
        <position position="871"/>
    </location>
    <ligand>
        <name>ATP</name>
        <dbReference type="ChEBI" id="CHEBI:30616"/>
    </ligand>
</feature>
<feature type="binding site" evidence="5">
    <location>
        <position position="891"/>
    </location>
    <ligand>
        <name>Mg(2+)</name>
        <dbReference type="ChEBI" id="CHEBI:18420"/>
    </ligand>
</feature>
<feature type="binding site" evidence="5">
    <location>
        <position position="894"/>
    </location>
    <ligand>
        <name>ATP</name>
        <dbReference type="ChEBI" id="CHEBI:30616"/>
    </ligand>
</feature>
<feature type="binding site" evidence="5">
    <location>
        <position position="895"/>
    </location>
    <ligand>
        <name>ATP</name>
        <dbReference type="ChEBI" id="CHEBI:30616"/>
    </ligand>
</feature>
<feature type="binding site" evidence="4">
    <location>
        <position position="895"/>
    </location>
    <ligand>
        <name>Mg(2+)</name>
        <dbReference type="ChEBI" id="CHEBI:18420"/>
    </ligand>
</feature>
<dbReference type="EC" id="7.6.2.1"/>
<dbReference type="EMBL" id="BC090602">
    <property type="protein sequence ID" value="AAH90602.1"/>
    <property type="molecule type" value="mRNA"/>
</dbReference>
<dbReference type="RefSeq" id="NP_001025562.1">
    <property type="nucleotide sequence ID" value="NM_001030391.1"/>
</dbReference>
<dbReference type="SMR" id="Q5BL50"/>
<dbReference type="FunCoup" id="Q5BL50">
    <property type="interactions" value="328"/>
</dbReference>
<dbReference type="STRING" id="8364.ENSXETP00000037464"/>
<dbReference type="PaxDb" id="8364-ENSXETP00000045089"/>
<dbReference type="DNASU" id="594952"/>
<dbReference type="GeneID" id="594952"/>
<dbReference type="KEGG" id="xtr:594952"/>
<dbReference type="AGR" id="Xenbase:XB-GENE-490143"/>
<dbReference type="CTD" id="5205"/>
<dbReference type="Xenbase" id="XB-GENE-490143">
    <property type="gene designation" value="atp8b1"/>
</dbReference>
<dbReference type="eggNOG" id="KOG0206">
    <property type="taxonomic scope" value="Eukaryota"/>
</dbReference>
<dbReference type="InParanoid" id="Q5BL50"/>
<dbReference type="OMA" id="YVYGQRN"/>
<dbReference type="OrthoDB" id="377733at2759"/>
<dbReference type="Reactome" id="R-XTR-936837">
    <property type="pathway name" value="Ion transport by P-type ATPases"/>
</dbReference>
<dbReference type="Proteomes" id="UP000008143">
    <property type="component" value="Chromosome 1"/>
</dbReference>
<dbReference type="Bgee" id="ENSXETG00000020878">
    <property type="expression patterns" value="Expressed in 4-cell stage embryo and 10 other cell types or tissues"/>
</dbReference>
<dbReference type="GO" id="GO:0016324">
    <property type="term" value="C:apical plasma membrane"/>
    <property type="evidence" value="ECO:0007669"/>
    <property type="project" value="UniProtKB-SubCell"/>
</dbReference>
<dbReference type="GO" id="GO:0005783">
    <property type="term" value="C:endoplasmic reticulum"/>
    <property type="evidence" value="ECO:0007669"/>
    <property type="project" value="UniProtKB-SubCell"/>
</dbReference>
<dbReference type="GO" id="GO:0005794">
    <property type="term" value="C:Golgi apparatus"/>
    <property type="evidence" value="ECO:0007669"/>
    <property type="project" value="UniProtKB-SubCell"/>
</dbReference>
<dbReference type="GO" id="GO:1990531">
    <property type="term" value="C:phospholipid-translocating ATPase complex"/>
    <property type="evidence" value="ECO:0000250"/>
    <property type="project" value="UniProtKB"/>
</dbReference>
<dbReference type="GO" id="GO:0032420">
    <property type="term" value="C:stereocilium"/>
    <property type="evidence" value="ECO:0007669"/>
    <property type="project" value="UniProtKB-SubCell"/>
</dbReference>
<dbReference type="GO" id="GO:0005524">
    <property type="term" value="F:ATP binding"/>
    <property type="evidence" value="ECO:0007669"/>
    <property type="project" value="UniProtKB-KW"/>
</dbReference>
<dbReference type="GO" id="GO:0016887">
    <property type="term" value="F:ATP hydrolysis activity"/>
    <property type="evidence" value="ECO:0007669"/>
    <property type="project" value="InterPro"/>
</dbReference>
<dbReference type="GO" id="GO:0000287">
    <property type="term" value="F:magnesium ion binding"/>
    <property type="evidence" value="ECO:0007669"/>
    <property type="project" value="InterPro"/>
</dbReference>
<dbReference type="GO" id="GO:0140346">
    <property type="term" value="F:phosphatidylserine flippase activity"/>
    <property type="evidence" value="ECO:0000250"/>
    <property type="project" value="UniProtKB"/>
</dbReference>
<dbReference type="GO" id="GO:0090556">
    <property type="term" value="F:phosphatidylserine floppase activity"/>
    <property type="evidence" value="ECO:0007669"/>
    <property type="project" value="RHEA"/>
</dbReference>
<dbReference type="GO" id="GO:0045176">
    <property type="term" value="P:apical protein localization"/>
    <property type="evidence" value="ECO:0000250"/>
    <property type="project" value="UniProtKB"/>
</dbReference>
<dbReference type="GO" id="GO:2001225">
    <property type="term" value="P:regulation of chloride transport"/>
    <property type="evidence" value="ECO:0000250"/>
    <property type="project" value="UniProtKB"/>
</dbReference>
<dbReference type="CDD" id="cd02073">
    <property type="entry name" value="P-type_ATPase_APLT_Dnf-like"/>
    <property type="match status" value="1"/>
</dbReference>
<dbReference type="FunFam" id="3.40.1110.10:FF:000055">
    <property type="entry name" value="Phospholipid-transporting ATPase"/>
    <property type="match status" value="1"/>
</dbReference>
<dbReference type="FunFam" id="3.40.50.1000:FF:000001">
    <property type="entry name" value="Phospholipid-transporting ATPase IC"/>
    <property type="match status" value="1"/>
</dbReference>
<dbReference type="Gene3D" id="3.40.1110.10">
    <property type="entry name" value="Calcium-transporting ATPase, cytoplasmic domain N"/>
    <property type="match status" value="1"/>
</dbReference>
<dbReference type="Gene3D" id="2.70.150.10">
    <property type="entry name" value="Calcium-transporting ATPase, cytoplasmic transduction domain A"/>
    <property type="match status" value="1"/>
</dbReference>
<dbReference type="Gene3D" id="3.40.50.1000">
    <property type="entry name" value="HAD superfamily/HAD-like"/>
    <property type="match status" value="1"/>
</dbReference>
<dbReference type="InterPro" id="IPR023299">
    <property type="entry name" value="ATPase_P-typ_cyto_dom_N"/>
</dbReference>
<dbReference type="InterPro" id="IPR018303">
    <property type="entry name" value="ATPase_P-typ_P_site"/>
</dbReference>
<dbReference type="InterPro" id="IPR023298">
    <property type="entry name" value="ATPase_P-typ_TM_dom_sf"/>
</dbReference>
<dbReference type="InterPro" id="IPR008250">
    <property type="entry name" value="ATPase_P-typ_transduc_dom_A_sf"/>
</dbReference>
<dbReference type="InterPro" id="IPR036412">
    <property type="entry name" value="HAD-like_sf"/>
</dbReference>
<dbReference type="InterPro" id="IPR023214">
    <property type="entry name" value="HAD_sf"/>
</dbReference>
<dbReference type="InterPro" id="IPR006539">
    <property type="entry name" value="P-type_ATPase_IV"/>
</dbReference>
<dbReference type="InterPro" id="IPR032631">
    <property type="entry name" value="P-type_ATPase_N"/>
</dbReference>
<dbReference type="InterPro" id="IPR001757">
    <property type="entry name" value="P_typ_ATPase"/>
</dbReference>
<dbReference type="InterPro" id="IPR032630">
    <property type="entry name" value="P_typ_ATPase_c"/>
</dbReference>
<dbReference type="InterPro" id="IPR044492">
    <property type="entry name" value="P_typ_ATPase_HD_dom"/>
</dbReference>
<dbReference type="NCBIfam" id="TIGR01652">
    <property type="entry name" value="ATPase-Plipid"/>
    <property type="match status" value="1"/>
</dbReference>
<dbReference type="NCBIfam" id="TIGR01494">
    <property type="entry name" value="ATPase_P-type"/>
    <property type="match status" value="1"/>
</dbReference>
<dbReference type="PANTHER" id="PTHR24092:SF48">
    <property type="entry name" value="PHOSPHOLIPID-TRANSPORTING ATPASE IC"/>
    <property type="match status" value="1"/>
</dbReference>
<dbReference type="PANTHER" id="PTHR24092">
    <property type="entry name" value="PROBABLE PHOSPHOLIPID-TRANSPORTING ATPASE"/>
    <property type="match status" value="1"/>
</dbReference>
<dbReference type="Pfam" id="PF13246">
    <property type="entry name" value="Cation_ATPase"/>
    <property type="match status" value="1"/>
</dbReference>
<dbReference type="Pfam" id="PF00122">
    <property type="entry name" value="E1-E2_ATPase"/>
    <property type="match status" value="1"/>
</dbReference>
<dbReference type="Pfam" id="PF16212">
    <property type="entry name" value="PhoLip_ATPase_C"/>
    <property type="match status" value="1"/>
</dbReference>
<dbReference type="Pfam" id="PF16209">
    <property type="entry name" value="PhoLip_ATPase_N"/>
    <property type="match status" value="1"/>
</dbReference>
<dbReference type="PRINTS" id="PR00119">
    <property type="entry name" value="CATATPASE"/>
</dbReference>
<dbReference type="SFLD" id="SFLDG00002">
    <property type="entry name" value="C1.7:_P-type_atpase_like"/>
    <property type="match status" value="1"/>
</dbReference>
<dbReference type="SFLD" id="SFLDF00027">
    <property type="entry name" value="p-type_atpase"/>
    <property type="match status" value="1"/>
</dbReference>
<dbReference type="SUPFAM" id="SSF81653">
    <property type="entry name" value="Calcium ATPase, transduction domain A"/>
    <property type="match status" value="1"/>
</dbReference>
<dbReference type="SUPFAM" id="SSF81665">
    <property type="entry name" value="Calcium ATPase, transmembrane domain M"/>
    <property type="match status" value="1"/>
</dbReference>
<dbReference type="SUPFAM" id="SSF56784">
    <property type="entry name" value="HAD-like"/>
    <property type="match status" value="1"/>
</dbReference>
<dbReference type="SUPFAM" id="SSF81660">
    <property type="entry name" value="Metal cation-transporting ATPase, ATP-binding domain N"/>
    <property type="match status" value="1"/>
</dbReference>
<dbReference type="PROSITE" id="PS00154">
    <property type="entry name" value="ATPASE_E1_E2"/>
    <property type="match status" value="1"/>
</dbReference>
<name>AT8B1_XENTR</name>